<proteinExistence type="inferred from homology"/>
<evidence type="ECO:0000250" key="1">
    <source>
        <dbReference type="UniProtKB" id="A0A509AN59"/>
    </source>
</evidence>
<evidence type="ECO:0000255" key="2">
    <source>
        <dbReference type="HAMAP-Rule" id="MF_03109"/>
    </source>
</evidence>
<evidence type="ECO:0000255" key="3">
    <source>
        <dbReference type="PROSITE-ProRule" id="PRU01052"/>
    </source>
</evidence>
<keyword id="KW-0175">Coiled coil</keyword>
<keyword id="KW-0256">Endoplasmic reticulum</keyword>
<keyword id="KW-0342">GTP-binding</keyword>
<keyword id="KW-0378">Hydrolase</keyword>
<keyword id="KW-0472">Membrane</keyword>
<keyword id="KW-0547">Nucleotide-binding</keyword>
<keyword id="KW-1185">Reference proteome</keyword>
<keyword id="KW-0812">Transmembrane</keyword>
<keyword id="KW-1133">Transmembrane helix</keyword>
<dbReference type="EC" id="3.6.5.-" evidence="2"/>
<dbReference type="EMBL" id="LN999946">
    <property type="protein sequence ID" value="CZT99872.1"/>
    <property type="molecule type" value="Genomic_DNA"/>
</dbReference>
<dbReference type="RefSeq" id="XP_001348332.2">
    <property type="nucleotide sequence ID" value="XM_001348296.2"/>
</dbReference>
<dbReference type="SMR" id="Q8ILT5"/>
<dbReference type="FunCoup" id="Q8ILT5">
    <property type="interactions" value="6"/>
</dbReference>
<dbReference type="STRING" id="36329.Q8ILT5"/>
<dbReference type="PaxDb" id="5833-PF14_0159"/>
<dbReference type="EnsemblProtists" id="CZT99872">
    <property type="protein sequence ID" value="CZT99872"/>
    <property type="gene ID" value="PF3D7_1416100"/>
</dbReference>
<dbReference type="GeneID" id="811740"/>
<dbReference type="KEGG" id="pfa:PF3D7_1416100"/>
<dbReference type="VEuPathDB" id="PlasmoDB:PF3D7_1416100"/>
<dbReference type="HOGENOM" id="CLU_312978_0_0_1"/>
<dbReference type="InParanoid" id="Q8ILT5"/>
<dbReference type="OMA" id="WREISMA"/>
<dbReference type="OrthoDB" id="1597724at2759"/>
<dbReference type="PhylomeDB" id="Q8ILT5"/>
<dbReference type="Proteomes" id="UP000001450">
    <property type="component" value="Chromosome 14"/>
</dbReference>
<dbReference type="GO" id="GO:0005783">
    <property type="term" value="C:endoplasmic reticulum"/>
    <property type="evidence" value="ECO:0000318"/>
    <property type="project" value="GO_Central"/>
</dbReference>
<dbReference type="GO" id="GO:0005789">
    <property type="term" value="C:endoplasmic reticulum membrane"/>
    <property type="evidence" value="ECO:0007669"/>
    <property type="project" value="UniProtKB-SubCell"/>
</dbReference>
<dbReference type="GO" id="GO:0005525">
    <property type="term" value="F:GTP binding"/>
    <property type="evidence" value="ECO:0007669"/>
    <property type="project" value="UniProtKB-UniRule"/>
</dbReference>
<dbReference type="GO" id="GO:0003924">
    <property type="term" value="F:GTPase activity"/>
    <property type="evidence" value="ECO:0000318"/>
    <property type="project" value="GO_Central"/>
</dbReference>
<dbReference type="GO" id="GO:0016320">
    <property type="term" value="P:endoplasmic reticulum membrane fusion"/>
    <property type="evidence" value="ECO:0000318"/>
    <property type="project" value="GO_Central"/>
</dbReference>
<dbReference type="CDD" id="cd01851">
    <property type="entry name" value="GBP"/>
    <property type="match status" value="1"/>
</dbReference>
<dbReference type="FunFam" id="3.40.50.300:FF:000727">
    <property type="entry name" value="Protein SEY1 homolog"/>
    <property type="match status" value="1"/>
</dbReference>
<dbReference type="Gene3D" id="3.40.50.300">
    <property type="entry name" value="P-loop containing nucleotide triphosphate hydrolases"/>
    <property type="match status" value="1"/>
</dbReference>
<dbReference type="HAMAP" id="MF_03109">
    <property type="entry name" value="Sey1"/>
    <property type="match status" value="1"/>
</dbReference>
<dbReference type="InterPro" id="IPR030386">
    <property type="entry name" value="G_GB1_RHD3_dom"/>
</dbReference>
<dbReference type="InterPro" id="IPR027417">
    <property type="entry name" value="P-loop_NTPase"/>
</dbReference>
<dbReference type="InterPro" id="IPR008803">
    <property type="entry name" value="RHD3/Sey1"/>
</dbReference>
<dbReference type="InterPro" id="IPR046758">
    <property type="entry name" value="Sey1/RHD3-like_3HB"/>
</dbReference>
<dbReference type="PANTHER" id="PTHR45923">
    <property type="entry name" value="PROTEIN SEY1"/>
    <property type="match status" value="1"/>
</dbReference>
<dbReference type="PANTHER" id="PTHR45923:SF2">
    <property type="entry name" value="PROTEIN SEY1"/>
    <property type="match status" value="1"/>
</dbReference>
<dbReference type="Pfam" id="PF05879">
    <property type="entry name" value="RHD3_GTPase"/>
    <property type="match status" value="1"/>
</dbReference>
<dbReference type="Pfam" id="PF20428">
    <property type="entry name" value="Sey1_3HB"/>
    <property type="match status" value="1"/>
</dbReference>
<dbReference type="SUPFAM" id="SSF52540">
    <property type="entry name" value="P-loop containing nucleoside triphosphate hydrolases"/>
    <property type="match status" value="1"/>
</dbReference>
<dbReference type="PROSITE" id="PS51715">
    <property type="entry name" value="G_GB1_RHD3"/>
    <property type="match status" value="1"/>
</dbReference>
<reference key="1">
    <citation type="journal article" date="2002" name="Nature">
        <title>Genome sequence of the human malaria parasite Plasmodium falciparum.</title>
        <authorList>
            <person name="Gardner M.J."/>
            <person name="Hall N."/>
            <person name="Fung E."/>
            <person name="White O."/>
            <person name="Berriman M."/>
            <person name="Hyman R.W."/>
            <person name="Carlton J.M."/>
            <person name="Pain A."/>
            <person name="Nelson K.E."/>
            <person name="Bowman S."/>
            <person name="Paulsen I.T."/>
            <person name="James K.D."/>
            <person name="Eisen J.A."/>
            <person name="Rutherford K.M."/>
            <person name="Salzberg S.L."/>
            <person name="Craig A."/>
            <person name="Kyes S."/>
            <person name="Chan M.-S."/>
            <person name="Nene V."/>
            <person name="Shallom S.J."/>
            <person name="Suh B."/>
            <person name="Peterson J."/>
            <person name="Angiuoli S."/>
            <person name="Pertea M."/>
            <person name="Allen J."/>
            <person name="Selengut J."/>
            <person name="Haft D."/>
            <person name="Mather M.W."/>
            <person name="Vaidya A.B."/>
            <person name="Martin D.M.A."/>
            <person name="Fairlamb A.H."/>
            <person name="Fraunholz M.J."/>
            <person name="Roos D.S."/>
            <person name="Ralph S.A."/>
            <person name="McFadden G.I."/>
            <person name="Cummings L.M."/>
            <person name="Subramanian G.M."/>
            <person name="Mungall C."/>
            <person name="Venter J.C."/>
            <person name="Carucci D.J."/>
            <person name="Hoffman S.L."/>
            <person name="Newbold C."/>
            <person name="Davis R.W."/>
            <person name="Fraser C.M."/>
            <person name="Barrell B.G."/>
        </authorList>
    </citation>
    <scope>NUCLEOTIDE SEQUENCE [LARGE SCALE GENOMIC DNA]</scope>
    <source>
        <strain>3D7</strain>
    </source>
</reference>
<organism>
    <name type="scientific">Plasmodium falciparum (isolate 3D7)</name>
    <dbReference type="NCBI Taxonomy" id="36329"/>
    <lineage>
        <taxon>Eukaryota</taxon>
        <taxon>Sar</taxon>
        <taxon>Alveolata</taxon>
        <taxon>Apicomplexa</taxon>
        <taxon>Aconoidasida</taxon>
        <taxon>Haemosporida</taxon>
        <taxon>Plasmodiidae</taxon>
        <taxon>Plasmodium</taxon>
        <taxon>Plasmodium (Laverania)</taxon>
    </lineage>
</organism>
<comment type="function">
    <text evidence="1">Probable GTP-binding protein involved in generating and maintaining the structure of the tubular endoplasmic reticulum network.</text>
</comment>
<comment type="subcellular location">
    <subcellularLocation>
        <location evidence="2">Endoplasmic reticulum membrane</location>
        <topology evidence="2">Multi-pass membrane protein</topology>
    </subcellularLocation>
</comment>
<comment type="similarity">
    <text evidence="3">Belongs to the TRAFAC class dynamin-like GTPase superfamily. GB1/RHD3 GTPase family. RHD3 subfamily.</text>
</comment>
<feature type="chain" id="PRO_0000384955" description="Protein SEY1 homolog">
    <location>
        <begin position="1"/>
        <end position="937"/>
    </location>
</feature>
<feature type="topological domain" description="Cytoplasmic" evidence="2">
    <location>
        <begin position="1"/>
        <end position="848"/>
    </location>
</feature>
<feature type="transmembrane region" description="Helical" evidence="2">
    <location>
        <begin position="849"/>
        <end position="869"/>
    </location>
</feature>
<feature type="topological domain" description="Lumenal" evidence="2">
    <location>
        <begin position="870"/>
        <end position="872"/>
    </location>
</feature>
<feature type="transmembrane region" description="Helical" evidence="2">
    <location>
        <begin position="873"/>
        <end position="893"/>
    </location>
</feature>
<feature type="topological domain" description="Cytoplasmic" evidence="2">
    <location>
        <begin position="894"/>
        <end position="937"/>
    </location>
</feature>
<feature type="domain" description="GB1/RHD3-type G" evidence="3">
    <location>
        <begin position="34"/>
        <end position="280"/>
    </location>
</feature>
<feature type="coiled-coil region" evidence="2">
    <location>
        <begin position="319"/>
        <end position="339"/>
    </location>
</feature>
<feature type="coiled-coil region" evidence="2">
    <location>
        <begin position="725"/>
        <end position="750"/>
    </location>
</feature>
<feature type="binding site" evidence="2">
    <location>
        <begin position="44"/>
        <end position="51"/>
    </location>
    <ligand>
        <name>GTP</name>
        <dbReference type="ChEBI" id="CHEBI:37565"/>
    </ligand>
</feature>
<accession>Q8ILT5</accession>
<accession>A0A144A1B3</accession>
<name>SEY1_PLAF7</name>
<sequence>MEKGVEKTQIIDYDGNVIEDLKEWMIDNKLNDLGFSYNVIAVLGSQSSGKSTLLNNLFKTSFDVMNTKQGHSQTTKGLWLSYDKFDDETNNSSSFFKLKKKNKPTLILDVEGTDSKERGDNRLTFEHRSALFCLALADCVIVNLWYHSLGNFTASNYGLLKTVMEVNLELFQQEKNSPKTILLFTVRDWFEEFAPIEVVRNKILDEYINKIWKEMKKPKEAEKLNINNFFIIEVVGLSHGIIKKEDFLKDVNNLRDKWINNLRPSKYSRNIPSDGFAQYCNNIWNTIVKQSQLDIPSQKEMLSTFRCQEIKNNVINNINKEIKEKSIESHNKVIENFKEWAEKNIIQKCLDDYFKDASRYKENICLRTSQELLDYLFTQLQAIVDNNLQYIQRTLCTKFFNELSNMYKICTIEKNTFSFSRDSNLKTVKDNNKNTSHEDIKRDLLNNNQDKCVHLWSNFLYNADKLEYFTFCNFYENYEKSNIEIKTNMKNDDNLKNDDNLKNDAHNNITTHQFNYKPTLSVLSTSIYKDSNRIRNIQCGILLNKTRQTIKNSFKNMDTYLLTTKNTEEYWNNTVQLVLKLQDNINTHLTKCFINLKGTNHNNLNIYNDDMMYNNDDMVFNNNDDDDNNNNNNNNNYYYYNKNDDANLSKDENYNNKFSFSLTNEKGIFQNINNNNEGSDEICYTNALKKIDLIKNKQVYKSTINEDINNKLQNKKYIHELKNYYLDEIMDVLKNKLDEISENLATIIIQRFESVFNYDEYEQPRQWRDISMAELKKIFLKSKNYAFLIIDILQKNIKVELIDDYLPNNFIKDEIIEKGKIKAKRRIQEICRDAQYIQETGSKMSLKNVPVVFWIILLLFGWNEILFFIRMFFKLNVILPLFFAAAFIVSTFVYNGNTQALSYINKIIFYMAKNSYNFFKHIQAISNPPPKNVQKQE</sequence>
<protein>
    <recommendedName>
        <fullName evidence="2">Protein SEY1 homolog</fullName>
        <ecNumber evidence="2">3.6.5.-</ecNumber>
    </recommendedName>
</protein>
<gene>
    <name evidence="1" type="primary">SEY1</name>
    <name type="ORF">PF14_0159</name>
    <name type="ORF">PF3D7_1416100</name>
</gene>